<accession>Q8GQP7</accession>
<accession>F8IM76</accession>
<accession>Q71LI4</accession>
<protein>
    <recommendedName>
        <fullName evidence="1">Bifunctional protein GlmU</fullName>
    </recommendedName>
    <domain>
        <recommendedName>
            <fullName evidence="1">UDP-N-acetylglucosamine pyrophosphorylase</fullName>
            <ecNumber evidence="1">2.7.7.23</ecNumber>
        </recommendedName>
        <alternativeName>
            <fullName evidence="1">N-acetylglucosamine-1-phosphate uridyltransferase</fullName>
        </alternativeName>
    </domain>
    <domain>
        <recommendedName>
            <fullName evidence="1">Glucosamine-1-phosphate N-acetyltransferase</fullName>
            <ecNumber evidence="1">2.3.1.157</ecNumber>
        </recommendedName>
    </domain>
</protein>
<evidence type="ECO:0000255" key="1">
    <source>
        <dbReference type="HAMAP-Rule" id="MF_01631"/>
    </source>
</evidence>
<evidence type="ECO:0000305" key="2"/>
<name>GLMU_STREC</name>
<proteinExistence type="inferred from homology"/>
<comment type="function">
    <text evidence="1">Catalyzes the last two sequential reactions in the de novo biosynthetic pathway for UDP-N-acetylglucosamine (UDP-GlcNAc). The C-terminal domain catalyzes the transfer of acetyl group from acetyl coenzyme A to glucosamine-1-phosphate (GlcN-1-P) to produce N-acetylglucosamine-1-phosphate (GlcNAc-1-P), which is converted into UDP-GlcNAc by the transfer of uridine 5-monophosphate (from uridine 5-triphosphate), a reaction catalyzed by the N-terminal domain.</text>
</comment>
<comment type="catalytic activity">
    <reaction evidence="1">
        <text>alpha-D-glucosamine 1-phosphate + acetyl-CoA = N-acetyl-alpha-D-glucosamine 1-phosphate + CoA + H(+)</text>
        <dbReference type="Rhea" id="RHEA:13725"/>
        <dbReference type="ChEBI" id="CHEBI:15378"/>
        <dbReference type="ChEBI" id="CHEBI:57287"/>
        <dbReference type="ChEBI" id="CHEBI:57288"/>
        <dbReference type="ChEBI" id="CHEBI:57776"/>
        <dbReference type="ChEBI" id="CHEBI:58516"/>
        <dbReference type="EC" id="2.3.1.157"/>
    </reaction>
</comment>
<comment type="catalytic activity">
    <reaction evidence="1">
        <text>N-acetyl-alpha-D-glucosamine 1-phosphate + UTP + H(+) = UDP-N-acetyl-alpha-D-glucosamine + diphosphate</text>
        <dbReference type="Rhea" id="RHEA:13509"/>
        <dbReference type="ChEBI" id="CHEBI:15378"/>
        <dbReference type="ChEBI" id="CHEBI:33019"/>
        <dbReference type="ChEBI" id="CHEBI:46398"/>
        <dbReference type="ChEBI" id="CHEBI:57705"/>
        <dbReference type="ChEBI" id="CHEBI:57776"/>
        <dbReference type="EC" id="2.7.7.23"/>
    </reaction>
</comment>
<comment type="cofactor">
    <cofactor evidence="1">
        <name>Mg(2+)</name>
        <dbReference type="ChEBI" id="CHEBI:18420"/>
    </cofactor>
    <text evidence="1">Binds 1 Mg(2+) ion per subunit.</text>
</comment>
<comment type="pathway">
    <text evidence="1">Nucleotide-sugar biosynthesis; UDP-N-acetyl-alpha-D-glucosamine biosynthesis; N-acetyl-alpha-D-glucosamine 1-phosphate from alpha-D-glucosamine 6-phosphate (route II): step 2/2.</text>
</comment>
<comment type="pathway">
    <text evidence="1">Nucleotide-sugar biosynthesis; UDP-N-acetyl-alpha-D-glucosamine biosynthesis; UDP-N-acetyl-alpha-D-glucosamine from N-acetyl-alpha-D-glucosamine 1-phosphate: step 1/1.</text>
</comment>
<comment type="pathway">
    <text evidence="1">Bacterial outer membrane biogenesis; LPS lipid A biosynthesis.</text>
</comment>
<comment type="subunit">
    <text evidence="1">Homotrimer.</text>
</comment>
<comment type="subcellular location">
    <subcellularLocation>
        <location evidence="1">Cytoplasm</location>
    </subcellularLocation>
</comment>
<comment type="similarity">
    <text evidence="1">In the N-terminal section; belongs to the N-acetylglucosamine-1-phosphate uridyltransferase family.</text>
</comment>
<comment type="similarity">
    <text evidence="1">In the C-terminal section; belongs to the transferase hexapeptide repeat family.</text>
</comment>
<organism>
    <name type="scientific">Streptococcus equi subsp. zooepidemicus (strain ATCC 35246 / C74-63)</name>
    <dbReference type="NCBI Taxonomy" id="1051072"/>
    <lineage>
        <taxon>Bacteria</taxon>
        <taxon>Bacillati</taxon>
        <taxon>Bacillota</taxon>
        <taxon>Bacilli</taxon>
        <taxon>Lactobacillales</taxon>
        <taxon>Streptococcaceae</taxon>
        <taxon>Streptococcus</taxon>
    </lineage>
</organism>
<sequence>MKNYAIILAAGKGTRMNSGLPKVLHKVSGLSMLEHVLKSVSALAPQKQLTVIGHQAEQVRAVLGDQLLTVVQEEQLGTGHAVMMAEEELSGLEGQTLVIAGDTPLIRGESLKALLDYHIREKNVATILTANAKDPFGYGRIIRNAAGEVVNIVEQKDANEAEQEVKEINTGTYIFDNKRLFEALKHLTTDNAQGEYYLTDVISIFKASQEKVGAYLLKDFDESLGVNDRLALAQAEVIMQERINKQHMLNGVTLQNPAATYIESSVEIAPDVLIEANVTLKGQTRIGSRSVITNGSYILDSRLGEGVVVSQSVIEGSVLADGVTVGPYAHIRPDSQLDECVHIGNFVEVKGSHLGANTKAGHLTYLGNAEIGSEVNIGAGSITVNYDGQRKYQTVIGDHAFIGSHSTLIAPVEVGENALTAAGSTIAQSVPADSVAIGRSRQVVKEGYAKRLPHHPDQPQ</sequence>
<gene>
    <name evidence="1" type="primary">glmU</name>
    <name type="ordered locus">SeseC_00234</name>
</gene>
<reference key="1">
    <citation type="journal article" date="2008" name="J. Mol. Evol.">
        <title>Evolution of the hyaluronic acid synthesis (has) operon in Streptococcus zooepidemicus and other pathogenic streptococci.</title>
        <authorList>
            <person name="Blank L.M."/>
            <person name="Hugenholtz P."/>
            <person name="Nielsen L.K."/>
        </authorList>
    </citation>
    <scope>NUCLEOTIDE SEQUENCE [GENOMIC DNA]</scope>
    <source>
        <strain>ATCC 35246 / C74-63</strain>
    </source>
</reference>
<reference key="2">
    <citation type="journal article" date="2011" name="J. Bacteriol.">
        <title>Complete genome sequence of Streptococcus equi subsp. zooepidemicus strain ATCC 35246.</title>
        <authorList>
            <person name="Ma Z."/>
            <person name="Geng J."/>
            <person name="Zhang H."/>
            <person name="Yu H."/>
            <person name="Yi L."/>
            <person name="Lei M."/>
            <person name="Lu C.P."/>
            <person name="Fan H.J."/>
            <person name="Hu S."/>
        </authorList>
    </citation>
    <scope>NUCLEOTIDE SEQUENCE [LARGE SCALE GENOMIC DNA]</scope>
    <source>
        <strain>ATCC 35246 / C74-63</strain>
    </source>
</reference>
<dbReference type="EC" id="2.7.7.23" evidence="1"/>
<dbReference type="EC" id="2.3.1.157" evidence="1"/>
<dbReference type="EMBL" id="AF347022">
    <property type="protein sequence ID" value="AAN65251.1"/>
    <property type="molecule type" value="Genomic_DNA"/>
</dbReference>
<dbReference type="EMBL" id="AF468690">
    <property type="protein sequence ID" value="AAQ05206.1"/>
    <property type="molecule type" value="Genomic_DNA"/>
</dbReference>
<dbReference type="EMBL" id="CP002904">
    <property type="protein sequence ID" value="AEJ24426.1"/>
    <property type="molecule type" value="Genomic_DNA"/>
</dbReference>
<dbReference type="RefSeq" id="WP_014622213.1">
    <property type="nucleotide sequence ID" value="NC_017582.1"/>
</dbReference>
<dbReference type="SMR" id="Q8GQP7"/>
<dbReference type="KEGG" id="sezo:SeseC_00234"/>
<dbReference type="PATRIC" id="fig|1051072.7.peg.194"/>
<dbReference type="HOGENOM" id="CLU_029499_15_2_9"/>
<dbReference type="UniPathway" id="UPA00113">
    <property type="reaction ID" value="UER00532"/>
</dbReference>
<dbReference type="UniPathway" id="UPA00113">
    <property type="reaction ID" value="UER00533"/>
</dbReference>
<dbReference type="UniPathway" id="UPA00973"/>
<dbReference type="Proteomes" id="UP000000499">
    <property type="component" value="Chromosome"/>
</dbReference>
<dbReference type="GO" id="GO:0005737">
    <property type="term" value="C:cytoplasm"/>
    <property type="evidence" value="ECO:0007669"/>
    <property type="project" value="UniProtKB-SubCell"/>
</dbReference>
<dbReference type="GO" id="GO:0016020">
    <property type="term" value="C:membrane"/>
    <property type="evidence" value="ECO:0007669"/>
    <property type="project" value="GOC"/>
</dbReference>
<dbReference type="GO" id="GO:0019134">
    <property type="term" value="F:glucosamine-1-phosphate N-acetyltransferase activity"/>
    <property type="evidence" value="ECO:0007669"/>
    <property type="project" value="UniProtKB-UniRule"/>
</dbReference>
<dbReference type="GO" id="GO:0000287">
    <property type="term" value="F:magnesium ion binding"/>
    <property type="evidence" value="ECO:0007669"/>
    <property type="project" value="UniProtKB-UniRule"/>
</dbReference>
<dbReference type="GO" id="GO:0003977">
    <property type="term" value="F:UDP-N-acetylglucosamine diphosphorylase activity"/>
    <property type="evidence" value="ECO:0007669"/>
    <property type="project" value="UniProtKB-UniRule"/>
</dbReference>
<dbReference type="GO" id="GO:0000902">
    <property type="term" value="P:cell morphogenesis"/>
    <property type="evidence" value="ECO:0007669"/>
    <property type="project" value="UniProtKB-UniRule"/>
</dbReference>
<dbReference type="GO" id="GO:0071555">
    <property type="term" value="P:cell wall organization"/>
    <property type="evidence" value="ECO:0007669"/>
    <property type="project" value="UniProtKB-KW"/>
</dbReference>
<dbReference type="GO" id="GO:0009245">
    <property type="term" value="P:lipid A biosynthetic process"/>
    <property type="evidence" value="ECO:0007669"/>
    <property type="project" value="UniProtKB-UniRule"/>
</dbReference>
<dbReference type="GO" id="GO:0009252">
    <property type="term" value="P:peptidoglycan biosynthetic process"/>
    <property type="evidence" value="ECO:0007669"/>
    <property type="project" value="UniProtKB-UniRule"/>
</dbReference>
<dbReference type="GO" id="GO:0008360">
    <property type="term" value="P:regulation of cell shape"/>
    <property type="evidence" value="ECO:0007669"/>
    <property type="project" value="UniProtKB-KW"/>
</dbReference>
<dbReference type="GO" id="GO:0006048">
    <property type="term" value="P:UDP-N-acetylglucosamine biosynthetic process"/>
    <property type="evidence" value="ECO:0007669"/>
    <property type="project" value="UniProtKB-UniPathway"/>
</dbReference>
<dbReference type="CDD" id="cd02540">
    <property type="entry name" value="GT2_GlmU_N_bac"/>
    <property type="match status" value="1"/>
</dbReference>
<dbReference type="CDD" id="cd03353">
    <property type="entry name" value="LbH_GlmU_C"/>
    <property type="match status" value="1"/>
</dbReference>
<dbReference type="Gene3D" id="2.160.10.10">
    <property type="entry name" value="Hexapeptide repeat proteins"/>
    <property type="match status" value="1"/>
</dbReference>
<dbReference type="Gene3D" id="3.90.550.10">
    <property type="entry name" value="Spore Coat Polysaccharide Biosynthesis Protein SpsA, Chain A"/>
    <property type="match status" value="1"/>
</dbReference>
<dbReference type="HAMAP" id="MF_01631">
    <property type="entry name" value="GlmU"/>
    <property type="match status" value="1"/>
</dbReference>
<dbReference type="InterPro" id="IPR005882">
    <property type="entry name" value="Bifunctional_GlmU"/>
</dbReference>
<dbReference type="InterPro" id="IPR050065">
    <property type="entry name" value="GlmU-like"/>
</dbReference>
<dbReference type="InterPro" id="IPR038009">
    <property type="entry name" value="GlmU_C_LbH"/>
</dbReference>
<dbReference type="InterPro" id="IPR001451">
    <property type="entry name" value="Hexapep"/>
</dbReference>
<dbReference type="InterPro" id="IPR005835">
    <property type="entry name" value="NTP_transferase_dom"/>
</dbReference>
<dbReference type="InterPro" id="IPR029044">
    <property type="entry name" value="Nucleotide-diphossugar_trans"/>
</dbReference>
<dbReference type="InterPro" id="IPR011004">
    <property type="entry name" value="Trimer_LpxA-like_sf"/>
</dbReference>
<dbReference type="NCBIfam" id="TIGR01173">
    <property type="entry name" value="glmU"/>
    <property type="match status" value="1"/>
</dbReference>
<dbReference type="NCBIfam" id="NF010934">
    <property type="entry name" value="PRK14354.1"/>
    <property type="match status" value="1"/>
</dbReference>
<dbReference type="PANTHER" id="PTHR43584:SF3">
    <property type="entry name" value="BIFUNCTIONAL PROTEIN GLMU"/>
    <property type="match status" value="1"/>
</dbReference>
<dbReference type="PANTHER" id="PTHR43584">
    <property type="entry name" value="NUCLEOTIDYL TRANSFERASE"/>
    <property type="match status" value="1"/>
</dbReference>
<dbReference type="Pfam" id="PF00132">
    <property type="entry name" value="Hexapep"/>
    <property type="match status" value="1"/>
</dbReference>
<dbReference type="Pfam" id="PF00483">
    <property type="entry name" value="NTP_transferase"/>
    <property type="match status" value="1"/>
</dbReference>
<dbReference type="SUPFAM" id="SSF53448">
    <property type="entry name" value="Nucleotide-diphospho-sugar transferases"/>
    <property type="match status" value="1"/>
</dbReference>
<dbReference type="SUPFAM" id="SSF51161">
    <property type="entry name" value="Trimeric LpxA-like enzymes"/>
    <property type="match status" value="1"/>
</dbReference>
<feature type="chain" id="PRO_0000233848" description="Bifunctional protein GlmU">
    <location>
        <begin position="1"/>
        <end position="460"/>
    </location>
</feature>
<feature type="region of interest" description="Pyrophosphorylase" evidence="1">
    <location>
        <begin position="1"/>
        <end position="229"/>
    </location>
</feature>
<feature type="region of interest" description="Linker" evidence="1">
    <location>
        <begin position="230"/>
        <end position="250"/>
    </location>
</feature>
<feature type="region of interest" description="N-acetyltransferase" evidence="1">
    <location>
        <begin position="251"/>
        <end position="460"/>
    </location>
</feature>
<feature type="active site" description="Proton acceptor" evidence="1">
    <location>
        <position position="362"/>
    </location>
</feature>
<feature type="binding site" evidence="1">
    <location>
        <begin position="8"/>
        <end position="11"/>
    </location>
    <ligand>
        <name>UDP-N-acetyl-alpha-D-glucosamine</name>
        <dbReference type="ChEBI" id="CHEBI:57705"/>
    </ligand>
</feature>
<feature type="binding site" evidence="1">
    <location>
        <position position="22"/>
    </location>
    <ligand>
        <name>UDP-N-acetyl-alpha-D-glucosamine</name>
        <dbReference type="ChEBI" id="CHEBI:57705"/>
    </ligand>
</feature>
<feature type="binding site" evidence="1">
    <location>
        <position position="72"/>
    </location>
    <ligand>
        <name>UDP-N-acetyl-alpha-D-glucosamine</name>
        <dbReference type="ChEBI" id="CHEBI:57705"/>
    </ligand>
</feature>
<feature type="binding site" evidence="1">
    <location>
        <begin position="77"/>
        <end position="78"/>
    </location>
    <ligand>
        <name>UDP-N-acetyl-alpha-D-glucosamine</name>
        <dbReference type="ChEBI" id="CHEBI:57705"/>
    </ligand>
</feature>
<feature type="binding site" evidence="1">
    <location>
        <position position="102"/>
    </location>
    <ligand>
        <name>Mg(2+)</name>
        <dbReference type="ChEBI" id="CHEBI:18420"/>
    </ligand>
</feature>
<feature type="binding site" evidence="1">
    <location>
        <position position="139"/>
    </location>
    <ligand>
        <name>UDP-N-acetyl-alpha-D-glucosamine</name>
        <dbReference type="ChEBI" id="CHEBI:57705"/>
    </ligand>
</feature>
<feature type="binding site" evidence="1">
    <location>
        <position position="154"/>
    </location>
    <ligand>
        <name>UDP-N-acetyl-alpha-D-glucosamine</name>
        <dbReference type="ChEBI" id="CHEBI:57705"/>
    </ligand>
</feature>
<feature type="binding site" evidence="1">
    <location>
        <position position="169"/>
    </location>
    <ligand>
        <name>UDP-N-acetyl-alpha-D-glucosamine</name>
        <dbReference type="ChEBI" id="CHEBI:57705"/>
    </ligand>
</feature>
<feature type="binding site" evidence="1">
    <location>
        <position position="227"/>
    </location>
    <ligand>
        <name>Mg(2+)</name>
        <dbReference type="ChEBI" id="CHEBI:18420"/>
    </ligand>
</feature>
<feature type="binding site" evidence="1">
    <location>
        <position position="227"/>
    </location>
    <ligand>
        <name>UDP-N-acetyl-alpha-D-glucosamine</name>
        <dbReference type="ChEBI" id="CHEBI:57705"/>
    </ligand>
</feature>
<feature type="binding site" evidence="1">
    <location>
        <position position="332"/>
    </location>
    <ligand>
        <name>UDP-N-acetyl-alpha-D-glucosamine</name>
        <dbReference type="ChEBI" id="CHEBI:57705"/>
    </ligand>
</feature>
<feature type="binding site" evidence="1">
    <location>
        <position position="350"/>
    </location>
    <ligand>
        <name>UDP-N-acetyl-alpha-D-glucosamine</name>
        <dbReference type="ChEBI" id="CHEBI:57705"/>
    </ligand>
</feature>
<feature type="binding site" evidence="1">
    <location>
        <position position="365"/>
    </location>
    <ligand>
        <name>UDP-N-acetyl-alpha-D-glucosamine</name>
        <dbReference type="ChEBI" id="CHEBI:57705"/>
    </ligand>
</feature>
<feature type="binding site" evidence="1">
    <location>
        <position position="376"/>
    </location>
    <ligand>
        <name>UDP-N-acetyl-alpha-D-glucosamine</name>
        <dbReference type="ChEBI" id="CHEBI:57705"/>
    </ligand>
</feature>
<feature type="binding site" evidence="1">
    <location>
        <position position="379"/>
    </location>
    <ligand>
        <name>acetyl-CoA</name>
        <dbReference type="ChEBI" id="CHEBI:57288"/>
    </ligand>
</feature>
<feature type="binding site" evidence="1">
    <location>
        <begin position="385"/>
        <end position="386"/>
    </location>
    <ligand>
        <name>acetyl-CoA</name>
        <dbReference type="ChEBI" id="CHEBI:57288"/>
    </ligand>
</feature>
<feature type="binding site" evidence="1">
    <location>
        <position position="404"/>
    </location>
    <ligand>
        <name>acetyl-CoA</name>
        <dbReference type="ChEBI" id="CHEBI:57288"/>
    </ligand>
</feature>
<feature type="binding site" evidence="1">
    <location>
        <position position="422"/>
    </location>
    <ligand>
        <name>acetyl-CoA</name>
        <dbReference type="ChEBI" id="CHEBI:57288"/>
    </ligand>
</feature>
<feature type="binding site" evidence="1">
    <location>
        <position position="439"/>
    </location>
    <ligand>
        <name>acetyl-CoA</name>
        <dbReference type="ChEBI" id="CHEBI:57288"/>
    </ligand>
</feature>
<feature type="sequence conflict" description="In Ref. 1; AAQ05206." evidence="2" ref="1">
    <original>K</original>
    <variation>P</variation>
    <location>
        <position position="2"/>
    </location>
</feature>
<feature type="sequence conflict" description="In Ref. 1; AAQ05206." evidence="2" ref="1">
    <original>NSG</original>
    <variation>KSA</variation>
    <location>
        <begin position="17"/>
        <end position="19"/>
    </location>
</feature>
<feature type="sequence conflict" description="In Ref. 1; AAN65251." evidence="2" ref="1">
    <original>P</original>
    <variation>S</variation>
    <location>
        <position position="21"/>
    </location>
</feature>
<feature type="sequence conflict" description="In Ref. 1; AAQ05206." evidence="2" ref="1">
    <original>K</original>
    <variation>N</variation>
    <location>
        <position position="38"/>
    </location>
</feature>
<feature type="sequence conflict" description="In Ref. 1; AAQ05206." evidence="2" ref="1">
    <original>T</original>
    <variation>I</variation>
    <location>
        <position position="50"/>
    </location>
</feature>
<feature type="sequence conflict" description="In Ref. 1; AAQ05206." evidence="2" ref="1">
    <original>L</original>
    <variation>S</variation>
    <location>
        <position position="67"/>
    </location>
</feature>
<feature type="sequence conflict" description="In Ref. 1; AAQ05206." evidence="2" ref="1">
    <original>A</original>
    <variation>V</variation>
    <location>
        <position position="145"/>
    </location>
</feature>
<feature type="sequence conflict" description="In Ref. 1; AAQ05206." evidence="2" ref="1">
    <original>S</original>
    <variation>G</variation>
    <location>
        <position position="208"/>
    </location>
</feature>
<feature type="sequence conflict" description="In Ref. 1; AAQ05206." evidence="2" ref="1">
    <original>K</original>
    <variation>R</variation>
    <location>
        <position position="211"/>
    </location>
</feature>
<feature type="sequence conflict" description="In Ref. 1; AAQ05206." evidence="2" ref="1">
    <original>K</original>
    <variation>R</variation>
    <location>
        <position position="245"/>
    </location>
</feature>
<feature type="sequence conflict" description="In Ref. 1; AAQ05206." evidence="2" ref="1">
    <original>T</original>
    <variation>S</variation>
    <location>
        <position position="293"/>
    </location>
</feature>
<feature type="sequence conflict" description="In Ref. 1; AAQ05206." evidence="2" ref="1">
    <original>G</original>
    <variation>D</variation>
    <location>
        <position position="316"/>
    </location>
</feature>
<feature type="sequence conflict" description="In Ref. 1; AAQ05206." evidence="2" ref="1">
    <original>C</original>
    <variation>S</variation>
    <location>
        <position position="340"/>
    </location>
</feature>
<feature type="sequence conflict" description="In Ref. 1; AAQ05206." evidence="2" ref="1">
    <original>DQPQ</original>
    <variation>NQAK</variation>
    <location>
        <begin position="457"/>
        <end position="460"/>
    </location>
</feature>
<keyword id="KW-0012">Acyltransferase</keyword>
<keyword id="KW-0133">Cell shape</keyword>
<keyword id="KW-0961">Cell wall biogenesis/degradation</keyword>
<keyword id="KW-0963">Cytoplasm</keyword>
<keyword id="KW-0460">Magnesium</keyword>
<keyword id="KW-0479">Metal-binding</keyword>
<keyword id="KW-0511">Multifunctional enzyme</keyword>
<keyword id="KW-0548">Nucleotidyltransferase</keyword>
<keyword id="KW-0573">Peptidoglycan synthesis</keyword>
<keyword id="KW-0677">Repeat</keyword>
<keyword id="KW-0808">Transferase</keyword>